<proteinExistence type="evidence at protein level"/>
<evidence type="ECO:0000250" key="1"/>
<evidence type="ECO:0000250" key="2">
    <source>
        <dbReference type="UniProtKB" id="P35858"/>
    </source>
</evidence>
<evidence type="ECO:0000255" key="3"/>
<evidence type="ECO:0000305" key="4"/>
<protein>
    <recommendedName>
        <fullName>Insulin-like growth factor-binding protein complex acid labile subunit</fullName>
        <shortName>ALS</shortName>
    </recommendedName>
</protein>
<gene>
    <name type="primary">Igfals</name>
    <name type="synonym">Albs</name>
    <name type="synonym">Als</name>
</gene>
<comment type="function">
    <text>May have an important role in regulating the access of circulating IGFs to the tissues.</text>
</comment>
<comment type="subunit">
    <text evidence="2">Forms a ternary complex with IGF1 and IGFBP3.</text>
</comment>
<comment type="subcellular location">
    <subcellularLocation>
        <location>Secreted</location>
        <location>Extracellular space</location>
    </subcellularLocation>
</comment>
<dbReference type="EMBL" id="U66900">
    <property type="protein sequence ID" value="AAB17270.1"/>
    <property type="molecule type" value="Genomic_DNA"/>
</dbReference>
<dbReference type="EMBL" id="AK004926">
    <property type="protein sequence ID" value="BAB23677.1"/>
    <property type="molecule type" value="mRNA"/>
</dbReference>
<dbReference type="CCDS" id="CCDS37497.1"/>
<dbReference type="PIR" id="JC6128">
    <property type="entry name" value="JC6128"/>
</dbReference>
<dbReference type="RefSeq" id="NP_032366.2">
    <property type="nucleotide sequence ID" value="NM_008340.3"/>
</dbReference>
<dbReference type="SMR" id="P70389"/>
<dbReference type="BioGRID" id="200551">
    <property type="interactions" value="1"/>
</dbReference>
<dbReference type="FunCoup" id="P70389">
    <property type="interactions" value="7"/>
</dbReference>
<dbReference type="IntAct" id="P70389">
    <property type="interactions" value="1"/>
</dbReference>
<dbReference type="MINT" id="P70389"/>
<dbReference type="STRING" id="10090.ENSMUSP00000060169"/>
<dbReference type="GlyCosmos" id="P70389">
    <property type="glycosylation" value="7 sites, No reported glycans"/>
</dbReference>
<dbReference type="GlyGen" id="P70389">
    <property type="glycosylation" value="7 sites"/>
</dbReference>
<dbReference type="iPTMnet" id="P70389"/>
<dbReference type="PhosphoSitePlus" id="P70389"/>
<dbReference type="CPTAC" id="non-CPTAC-5574"/>
<dbReference type="jPOST" id="P70389"/>
<dbReference type="PaxDb" id="10090-ENSMUSP00000060169"/>
<dbReference type="PeptideAtlas" id="P70389"/>
<dbReference type="ProteomicsDB" id="296225"/>
<dbReference type="DNASU" id="16005"/>
<dbReference type="GeneID" id="16005"/>
<dbReference type="KEGG" id="mmu:16005"/>
<dbReference type="AGR" id="MGI:107973"/>
<dbReference type="CTD" id="3483"/>
<dbReference type="MGI" id="MGI:107973">
    <property type="gene designation" value="Igfals"/>
</dbReference>
<dbReference type="eggNOG" id="KOG0619">
    <property type="taxonomic scope" value="Eukaryota"/>
</dbReference>
<dbReference type="InParanoid" id="P70389"/>
<dbReference type="OrthoDB" id="2013775at2759"/>
<dbReference type="PhylomeDB" id="P70389"/>
<dbReference type="TreeFam" id="TF351124"/>
<dbReference type="Reactome" id="R-MMU-4641263">
    <property type="pathway name" value="Regulation of FZD by ubiquitination"/>
</dbReference>
<dbReference type="BioGRID-ORCS" id="16005">
    <property type="hits" value="3 hits in 78 CRISPR screens"/>
</dbReference>
<dbReference type="ChiTaRS" id="Igfals">
    <property type="organism name" value="mouse"/>
</dbReference>
<dbReference type="PRO" id="PR:P70389"/>
<dbReference type="Proteomes" id="UP000000589">
    <property type="component" value="Unplaced"/>
</dbReference>
<dbReference type="RNAct" id="P70389">
    <property type="molecule type" value="protein"/>
</dbReference>
<dbReference type="GO" id="GO:0042567">
    <property type="term" value="C:insulin-like growth factor ternary complex"/>
    <property type="evidence" value="ECO:0000250"/>
    <property type="project" value="BHF-UCL"/>
</dbReference>
<dbReference type="GO" id="GO:0007155">
    <property type="term" value="P:cell adhesion"/>
    <property type="evidence" value="ECO:0007669"/>
    <property type="project" value="UniProtKB-KW"/>
</dbReference>
<dbReference type="FunFam" id="3.80.10.10:FF:000540">
    <property type="entry name" value="Insulin-like growth factor-binding protein complex acid labile subunit"/>
    <property type="match status" value="1"/>
</dbReference>
<dbReference type="FunFam" id="3.80.10.10:FF:001263">
    <property type="entry name" value="Insulin-like growth factor-binding protein complex acid labile subunit"/>
    <property type="match status" value="1"/>
</dbReference>
<dbReference type="FunFam" id="3.80.10.10:FF:001264">
    <property type="entry name" value="Insulin-like growth factor-binding protein complex acid labile subunit"/>
    <property type="match status" value="1"/>
</dbReference>
<dbReference type="FunFam" id="3.80.10.10:FF:001518">
    <property type="entry name" value="Insulin-like growth factor-binding protein complex acid labile subunit"/>
    <property type="match status" value="1"/>
</dbReference>
<dbReference type="Gene3D" id="3.80.10.10">
    <property type="entry name" value="Ribonuclease Inhibitor"/>
    <property type="match status" value="4"/>
</dbReference>
<dbReference type="InterPro" id="IPR000483">
    <property type="entry name" value="Cys-rich_flank_reg_C"/>
</dbReference>
<dbReference type="InterPro" id="IPR001611">
    <property type="entry name" value="Leu-rich_rpt"/>
</dbReference>
<dbReference type="InterPro" id="IPR003591">
    <property type="entry name" value="Leu-rich_rpt_typical-subtyp"/>
</dbReference>
<dbReference type="InterPro" id="IPR032675">
    <property type="entry name" value="LRR_dom_sf"/>
</dbReference>
<dbReference type="InterPro" id="IPR000372">
    <property type="entry name" value="LRRNT"/>
</dbReference>
<dbReference type="PANTHER" id="PTHR45617">
    <property type="entry name" value="LEUCINE RICH REPEAT FAMILY PROTEIN"/>
    <property type="match status" value="1"/>
</dbReference>
<dbReference type="PANTHER" id="PTHR45617:SF101">
    <property type="entry name" value="LEUCINE-RICH ALPHA-2-GLYCOPROTEIN"/>
    <property type="match status" value="1"/>
</dbReference>
<dbReference type="Pfam" id="PF00560">
    <property type="entry name" value="LRR_1"/>
    <property type="match status" value="1"/>
</dbReference>
<dbReference type="Pfam" id="PF13855">
    <property type="entry name" value="LRR_8"/>
    <property type="match status" value="4"/>
</dbReference>
<dbReference type="Pfam" id="PF01462">
    <property type="entry name" value="LRRNT"/>
    <property type="match status" value="1"/>
</dbReference>
<dbReference type="SMART" id="SM00365">
    <property type="entry name" value="LRR_SD22"/>
    <property type="match status" value="3"/>
</dbReference>
<dbReference type="SMART" id="SM00369">
    <property type="entry name" value="LRR_TYP"/>
    <property type="match status" value="19"/>
</dbReference>
<dbReference type="SMART" id="SM00082">
    <property type="entry name" value="LRRCT"/>
    <property type="match status" value="1"/>
</dbReference>
<dbReference type="SMART" id="SM00013">
    <property type="entry name" value="LRRNT"/>
    <property type="match status" value="1"/>
</dbReference>
<dbReference type="SUPFAM" id="SSF52058">
    <property type="entry name" value="L domain-like"/>
    <property type="match status" value="2"/>
</dbReference>
<feature type="signal peptide" evidence="1">
    <location>
        <begin position="1"/>
        <end position="23"/>
    </location>
</feature>
<feature type="chain" id="PRO_0000020696" description="Insulin-like growth factor-binding protein complex acid labile subunit">
    <location>
        <begin position="24"/>
        <end position="603"/>
    </location>
</feature>
<feature type="domain" description="LRRNT">
    <location>
        <begin position="32"/>
        <end position="74"/>
    </location>
</feature>
<feature type="repeat" description="LRR 1">
    <location>
        <begin position="75"/>
        <end position="96"/>
    </location>
</feature>
<feature type="repeat" description="LRR 2">
    <location>
        <begin position="99"/>
        <end position="120"/>
    </location>
</feature>
<feature type="repeat" description="LRR 3">
    <location>
        <begin position="123"/>
        <end position="144"/>
    </location>
</feature>
<feature type="repeat" description="LRR 4">
    <location>
        <begin position="147"/>
        <end position="168"/>
    </location>
</feature>
<feature type="repeat" description="LRR 5">
    <location>
        <begin position="171"/>
        <end position="192"/>
    </location>
</feature>
<feature type="repeat" description="LRR 6">
    <location>
        <begin position="195"/>
        <end position="216"/>
    </location>
</feature>
<feature type="repeat" description="LRR 7">
    <location>
        <begin position="219"/>
        <end position="240"/>
    </location>
</feature>
<feature type="repeat" description="LRR 8">
    <location>
        <begin position="243"/>
        <end position="264"/>
    </location>
</feature>
<feature type="repeat" description="LRR 9">
    <location>
        <begin position="267"/>
        <end position="288"/>
    </location>
</feature>
<feature type="repeat" description="LRR 10">
    <location>
        <begin position="291"/>
        <end position="312"/>
    </location>
</feature>
<feature type="repeat" description="LRR 11">
    <location>
        <begin position="315"/>
        <end position="336"/>
    </location>
</feature>
<feature type="repeat" description="LRR 12">
    <location>
        <begin position="339"/>
        <end position="360"/>
    </location>
</feature>
<feature type="repeat" description="LRR 13">
    <location>
        <begin position="363"/>
        <end position="384"/>
    </location>
</feature>
<feature type="repeat" description="LRR 14">
    <location>
        <begin position="387"/>
        <end position="408"/>
    </location>
</feature>
<feature type="repeat" description="LRR 15">
    <location>
        <begin position="411"/>
        <end position="432"/>
    </location>
</feature>
<feature type="repeat" description="LRR 16">
    <location>
        <begin position="435"/>
        <end position="456"/>
    </location>
</feature>
<feature type="repeat" description="LRR 17">
    <location>
        <begin position="459"/>
        <end position="480"/>
    </location>
</feature>
<feature type="repeat" description="LRR 18">
    <location>
        <begin position="483"/>
        <end position="504"/>
    </location>
</feature>
<feature type="repeat" description="LRR 19">
    <location>
        <begin position="507"/>
        <end position="528"/>
    </location>
</feature>
<feature type="domain" description="LRRCT">
    <location>
        <begin position="535"/>
        <end position="603"/>
    </location>
</feature>
<feature type="glycosylation site" description="N-linked (GlcNAc...) asparagine" evidence="3">
    <location>
        <position position="64"/>
    </location>
</feature>
<feature type="glycosylation site" description="N-linked (GlcNAc...) asparagine" evidence="3">
    <location>
        <position position="85"/>
    </location>
</feature>
<feature type="glycosylation site" description="N-linked (GlcNAc...) asparagine" evidence="3">
    <location>
        <position position="96"/>
    </location>
</feature>
<feature type="glycosylation site" description="N-linked (GlcNAc...) asparagine" evidence="3">
    <location>
        <position position="368"/>
    </location>
</feature>
<feature type="glycosylation site" description="N-linked (GlcNAc...) asparagine" evidence="3">
    <location>
        <position position="515"/>
    </location>
</feature>
<feature type="glycosylation site" description="N-linked (GlcNAc...) asparagine" evidence="3">
    <location>
        <position position="578"/>
    </location>
</feature>
<feature type="glycosylation site" description="N-linked (GlcNAc...) asparagine" evidence="3">
    <location>
        <position position="586"/>
    </location>
</feature>
<feature type="disulfide bond" evidence="2">
    <location>
        <begin position="41"/>
        <end position="47"/>
    </location>
</feature>
<feature type="disulfide bond" evidence="2">
    <location>
        <begin position="45"/>
        <end position="60"/>
    </location>
</feature>
<feature type="disulfide bond" evidence="2">
    <location>
        <begin position="539"/>
        <end position="581"/>
    </location>
</feature>
<feature type="disulfide bond" evidence="2">
    <location>
        <begin position="541"/>
        <end position="603"/>
    </location>
</feature>
<feature type="disulfide bond" evidence="2">
    <location>
        <begin position="565"/>
        <end position="570"/>
    </location>
</feature>
<feature type="sequence conflict" description="In Ref. 2; BAB23677." evidence="4" ref="2">
    <original>G</original>
    <variation>S</variation>
    <location>
        <position position="71"/>
    </location>
</feature>
<accession>P70389</accession>
<accession>Q9DBI7</accession>
<keyword id="KW-0130">Cell adhesion</keyword>
<keyword id="KW-1015">Disulfide bond</keyword>
<keyword id="KW-0325">Glycoprotein</keyword>
<keyword id="KW-0433">Leucine-rich repeat</keyword>
<keyword id="KW-1185">Reference proteome</keyword>
<keyword id="KW-0677">Repeat</keyword>
<keyword id="KW-0964">Secreted</keyword>
<keyword id="KW-0732">Signal</keyword>
<organism>
    <name type="scientific">Mus musculus</name>
    <name type="common">Mouse</name>
    <dbReference type="NCBI Taxonomy" id="10090"/>
    <lineage>
        <taxon>Eukaryota</taxon>
        <taxon>Metazoa</taxon>
        <taxon>Chordata</taxon>
        <taxon>Craniata</taxon>
        <taxon>Vertebrata</taxon>
        <taxon>Euteleostomi</taxon>
        <taxon>Mammalia</taxon>
        <taxon>Eutheria</taxon>
        <taxon>Euarchontoglires</taxon>
        <taxon>Glires</taxon>
        <taxon>Rodentia</taxon>
        <taxon>Myomorpha</taxon>
        <taxon>Muroidea</taxon>
        <taxon>Muridae</taxon>
        <taxon>Murinae</taxon>
        <taxon>Mus</taxon>
        <taxon>Mus</taxon>
    </lineage>
</organism>
<name>ALS_MOUSE</name>
<reference key="1">
    <citation type="journal article" date="1996" name="Proc. Natl. Acad. Sci. U.S.A.">
        <title>Organization and chromosomal localization of the gene encoding the mouse acid labile subunit of the insulin-like growth factor binding complex.</title>
        <authorList>
            <person name="Boisclair Y.R."/>
            <person name="Seto D."/>
            <person name="Hsieh S."/>
            <person name="Hurst K.R."/>
            <person name="Ooi G.T."/>
        </authorList>
    </citation>
    <scope>NUCLEOTIDE SEQUENCE [GENOMIC DNA]</scope>
    <source>
        <strain>129/Sv</strain>
    </source>
</reference>
<reference key="2">
    <citation type="journal article" date="2005" name="Science">
        <title>The transcriptional landscape of the mammalian genome.</title>
        <authorList>
            <person name="Carninci P."/>
            <person name="Kasukawa T."/>
            <person name="Katayama S."/>
            <person name="Gough J."/>
            <person name="Frith M.C."/>
            <person name="Maeda N."/>
            <person name="Oyama R."/>
            <person name="Ravasi T."/>
            <person name="Lenhard B."/>
            <person name="Wells C."/>
            <person name="Kodzius R."/>
            <person name="Shimokawa K."/>
            <person name="Bajic V.B."/>
            <person name="Brenner S.E."/>
            <person name="Batalov S."/>
            <person name="Forrest A.R."/>
            <person name="Zavolan M."/>
            <person name="Davis M.J."/>
            <person name="Wilming L.G."/>
            <person name="Aidinis V."/>
            <person name="Allen J.E."/>
            <person name="Ambesi-Impiombato A."/>
            <person name="Apweiler R."/>
            <person name="Aturaliya R.N."/>
            <person name="Bailey T.L."/>
            <person name="Bansal M."/>
            <person name="Baxter L."/>
            <person name="Beisel K.W."/>
            <person name="Bersano T."/>
            <person name="Bono H."/>
            <person name="Chalk A.M."/>
            <person name="Chiu K.P."/>
            <person name="Choudhary V."/>
            <person name="Christoffels A."/>
            <person name="Clutterbuck D.R."/>
            <person name="Crowe M.L."/>
            <person name="Dalla E."/>
            <person name="Dalrymple B.P."/>
            <person name="de Bono B."/>
            <person name="Della Gatta G."/>
            <person name="di Bernardo D."/>
            <person name="Down T."/>
            <person name="Engstrom P."/>
            <person name="Fagiolini M."/>
            <person name="Faulkner G."/>
            <person name="Fletcher C.F."/>
            <person name="Fukushima T."/>
            <person name="Furuno M."/>
            <person name="Futaki S."/>
            <person name="Gariboldi M."/>
            <person name="Georgii-Hemming P."/>
            <person name="Gingeras T.R."/>
            <person name="Gojobori T."/>
            <person name="Green R.E."/>
            <person name="Gustincich S."/>
            <person name="Harbers M."/>
            <person name="Hayashi Y."/>
            <person name="Hensch T.K."/>
            <person name="Hirokawa N."/>
            <person name="Hill D."/>
            <person name="Huminiecki L."/>
            <person name="Iacono M."/>
            <person name="Ikeo K."/>
            <person name="Iwama A."/>
            <person name="Ishikawa T."/>
            <person name="Jakt M."/>
            <person name="Kanapin A."/>
            <person name="Katoh M."/>
            <person name="Kawasawa Y."/>
            <person name="Kelso J."/>
            <person name="Kitamura H."/>
            <person name="Kitano H."/>
            <person name="Kollias G."/>
            <person name="Krishnan S.P."/>
            <person name="Kruger A."/>
            <person name="Kummerfeld S.K."/>
            <person name="Kurochkin I.V."/>
            <person name="Lareau L.F."/>
            <person name="Lazarevic D."/>
            <person name="Lipovich L."/>
            <person name="Liu J."/>
            <person name="Liuni S."/>
            <person name="McWilliam S."/>
            <person name="Madan Babu M."/>
            <person name="Madera M."/>
            <person name="Marchionni L."/>
            <person name="Matsuda H."/>
            <person name="Matsuzawa S."/>
            <person name="Miki H."/>
            <person name="Mignone F."/>
            <person name="Miyake S."/>
            <person name="Morris K."/>
            <person name="Mottagui-Tabar S."/>
            <person name="Mulder N."/>
            <person name="Nakano N."/>
            <person name="Nakauchi H."/>
            <person name="Ng P."/>
            <person name="Nilsson R."/>
            <person name="Nishiguchi S."/>
            <person name="Nishikawa S."/>
            <person name="Nori F."/>
            <person name="Ohara O."/>
            <person name="Okazaki Y."/>
            <person name="Orlando V."/>
            <person name="Pang K.C."/>
            <person name="Pavan W.J."/>
            <person name="Pavesi G."/>
            <person name="Pesole G."/>
            <person name="Petrovsky N."/>
            <person name="Piazza S."/>
            <person name="Reed J."/>
            <person name="Reid J.F."/>
            <person name="Ring B.Z."/>
            <person name="Ringwald M."/>
            <person name="Rost B."/>
            <person name="Ruan Y."/>
            <person name="Salzberg S.L."/>
            <person name="Sandelin A."/>
            <person name="Schneider C."/>
            <person name="Schoenbach C."/>
            <person name="Sekiguchi K."/>
            <person name="Semple C.A."/>
            <person name="Seno S."/>
            <person name="Sessa L."/>
            <person name="Sheng Y."/>
            <person name="Shibata Y."/>
            <person name="Shimada H."/>
            <person name="Shimada K."/>
            <person name="Silva D."/>
            <person name="Sinclair B."/>
            <person name="Sperling S."/>
            <person name="Stupka E."/>
            <person name="Sugiura K."/>
            <person name="Sultana R."/>
            <person name="Takenaka Y."/>
            <person name="Taki K."/>
            <person name="Tammoja K."/>
            <person name="Tan S.L."/>
            <person name="Tang S."/>
            <person name="Taylor M.S."/>
            <person name="Tegner J."/>
            <person name="Teichmann S.A."/>
            <person name="Ueda H.R."/>
            <person name="van Nimwegen E."/>
            <person name="Verardo R."/>
            <person name="Wei C.L."/>
            <person name="Yagi K."/>
            <person name="Yamanishi H."/>
            <person name="Zabarovsky E."/>
            <person name="Zhu S."/>
            <person name="Zimmer A."/>
            <person name="Hide W."/>
            <person name="Bult C."/>
            <person name="Grimmond S.M."/>
            <person name="Teasdale R.D."/>
            <person name="Liu E.T."/>
            <person name="Brusic V."/>
            <person name="Quackenbush J."/>
            <person name="Wahlestedt C."/>
            <person name="Mattick J.S."/>
            <person name="Hume D.A."/>
            <person name="Kai C."/>
            <person name="Sasaki D."/>
            <person name="Tomaru Y."/>
            <person name="Fukuda S."/>
            <person name="Kanamori-Katayama M."/>
            <person name="Suzuki M."/>
            <person name="Aoki J."/>
            <person name="Arakawa T."/>
            <person name="Iida J."/>
            <person name="Imamura K."/>
            <person name="Itoh M."/>
            <person name="Kato T."/>
            <person name="Kawaji H."/>
            <person name="Kawagashira N."/>
            <person name="Kawashima T."/>
            <person name="Kojima M."/>
            <person name="Kondo S."/>
            <person name="Konno H."/>
            <person name="Nakano K."/>
            <person name="Ninomiya N."/>
            <person name="Nishio T."/>
            <person name="Okada M."/>
            <person name="Plessy C."/>
            <person name="Shibata K."/>
            <person name="Shiraki T."/>
            <person name="Suzuki S."/>
            <person name="Tagami M."/>
            <person name="Waki K."/>
            <person name="Watahiki A."/>
            <person name="Okamura-Oho Y."/>
            <person name="Suzuki H."/>
            <person name="Kawai J."/>
            <person name="Hayashizaki Y."/>
        </authorList>
    </citation>
    <scope>NUCLEOTIDE SEQUENCE [LARGE SCALE MRNA]</scope>
    <source>
        <strain>C57BL/6J</strain>
        <tissue>Liver</tissue>
    </source>
</reference>
<reference key="3">
    <citation type="journal article" date="2010" name="Cell">
        <title>A tissue-specific atlas of mouse protein phosphorylation and expression.</title>
        <authorList>
            <person name="Huttlin E.L."/>
            <person name="Jedrychowski M.P."/>
            <person name="Elias J.E."/>
            <person name="Goswami T."/>
            <person name="Rad R."/>
            <person name="Beausoleil S.A."/>
            <person name="Villen J."/>
            <person name="Haas W."/>
            <person name="Sowa M.E."/>
            <person name="Gygi S.P."/>
        </authorList>
    </citation>
    <scope>IDENTIFICATION BY MASS SPECTROMETRY [LARGE SCALE ANALYSIS]</scope>
    <source>
        <tissue>Heart</tissue>
        <tissue>Lung</tissue>
        <tissue>Spleen</tissue>
    </source>
</reference>
<sequence length="603" mass="66960">MALRTGSPALVVLLAFWVALGPCYLQGTDPGASADAEGPQCPVTCTCSYDDYTDELSVFCSSRNLTQLPDGIPVSTRALWLDGNNLSSIPSAAFQNLSSLDFLNLQGSWLRSLEPQALLGLQNLYHLHLERNLLRSLAAGLFRHTPSLASLSLGNNLLGRLEEGLFRGLSHLWDLNLGWNSLVVLPDTVFQGLGNLHELVLAGNKLTYLQPALLCGLGELRELDLSRNALRSVKANVFIHLPRLQKLYLDRNLITAVAPRAFLGMKALRWLDLSHNRVAGLLEDTFPGLLGLHVLRLAHNAITSLRPRTFKDLHFLEELQLGHNRIRQLGEKTFEGLGQLEVLTLNDNQIHEVKVGAFFGLFNVAVMNLSGNCLRSLPEHVFQGLGRLHSLHLEHSCLGRIRLHTFAGLSGLRRLFLRDNSISSIEEQSLAGLSELLELDLTANQLTHLPRQLFQGLGQLEYLLLSNNQLTMLSEDVLGPLQRAFWLDLSHNRLETPAEGLFSSLGRLRYLNLRNNSLQTFVPQPGLERLWLDANPWDCSCPLKALRDFALQNPGVVPRFVQTVCEGDDCQPVYTYNNITCAGPANVSGLDLRDISETLFVHC</sequence>